<organism>
    <name type="scientific">Prochlorococcus marinus (strain MIT 9211)</name>
    <dbReference type="NCBI Taxonomy" id="93059"/>
    <lineage>
        <taxon>Bacteria</taxon>
        <taxon>Bacillati</taxon>
        <taxon>Cyanobacteriota</taxon>
        <taxon>Cyanophyceae</taxon>
        <taxon>Synechococcales</taxon>
        <taxon>Prochlorococcaceae</taxon>
        <taxon>Prochlorococcus</taxon>
    </lineage>
</organism>
<name>RL14_PROM4</name>
<gene>
    <name evidence="1" type="primary">rplN</name>
    <name evidence="1" type="synonym">rpl14</name>
    <name type="ordered locus">P9211_16681</name>
</gene>
<sequence length="121" mass="13344">MIQQETFLTVADNSGAKKLQCIRVLGSNRRYAHVGDVIVAAVKDALPNMGVKKSDVVKAVVVRTKATLRRETGNSIRFDDNAAVLINEDKNPRGTRVFGPVARELRERNFTKIVSLAPEVI</sequence>
<keyword id="KW-1185">Reference proteome</keyword>
<keyword id="KW-0687">Ribonucleoprotein</keyword>
<keyword id="KW-0689">Ribosomal protein</keyword>
<keyword id="KW-0694">RNA-binding</keyword>
<keyword id="KW-0699">rRNA-binding</keyword>
<accession>A9BCN7</accession>
<comment type="function">
    <text evidence="1">Binds to 23S rRNA. Forms part of two intersubunit bridges in the 70S ribosome.</text>
</comment>
<comment type="subunit">
    <text evidence="1">Part of the 50S ribosomal subunit. Forms a cluster with proteins L3 and L19. In the 70S ribosome, L14 and L19 interact and together make contacts with the 16S rRNA in bridges B5 and B8.</text>
</comment>
<comment type="similarity">
    <text evidence="1">Belongs to the universal ribosomal protein uL14 family.</text>
</comment>
<evidence type="ECO:0000255" key="1">
    <source>
        <dbReference type="HAMAP-Rule" id="MF_01367"/>
    </source>
</evidence>
<evidence type="ECO:0000305" key="2"/>
<protein>
    <recommendedName>
        <fullName evidence="1">Large ribosomal subunit protein uL14</fullName>
    </recommendedName>
    <alternativeName>
        <fullName evidence="2">50S ribosomal protein L14</fullName>
    </alternativeName>
</protein>
<dbReference type="EMBL" id="CP000878">
    <property type="protein sequence ID" value="ABX09599.1"/>
    <property type="molecule type" value="Genomic_DNA"/>
</dbReference>
<dbReference type="RefSeq" id="WP_012196219.1">
    <property type="nucleotide sequence ID" value="NC_009976.1"/>
</dbReference>
<dbReference type="SMR" id="A9BCN7"/>
<dbReference type="STRING" id="93059.P9211_16681"/>
<dbReference type="KEGG" id="pmj:P9211_16681"/>
<dbReference type="eggNOG" id="COG0093">
    <property type="taxonomic scope" value="Bacteria"/>
</dbReference>
<dbReference type="HOGENOM" id="CLU_095071_2_1_3"/>
<dbReference type="OrthoDB" id="9806379at2"/>
<dbReference type="Proteomes" id="UP000000788">
    <property type="component" value="Chromosome"/>
</dbReference>
<dbReference type="GO" id="GO:0022625">
    <property type="term" value="C:cytosolic large ribosomal subunit"/>
    <property type="evidence" value="ECO:0007669"/>
    <property type="project" value="TreeGrafter"/>
</dbReference>
<dbReference type="GO" id="GO:0070180">
    <property type="term" value="F:large ribosomal subunit rRNA binding"/>
    <property type="evidence" value="ECO:0007669"/>
    <property type="project" value="TreeGrafter"/>
</dbReference>
<dbReference type="GO" id="GO:0003735">
    <property type="term" value="F:structural constituent of ribosome"/>
    <property type="evidence" value="ECO:0007669"/>
    <property type="project" value="InterPro"/>
</dbReference>
<dbReference type="GO" id="GO:0006412">
    <property type="term" value="P:translation"/>
    <property type="evidence" value="ECO:0007669"/>
    <property type="project" value="UniProtKB-UniRule"/>
</dbReference>
<dbReference type="CDD" id="cd00337">
    <property type="entry name" value="Ribosomal_uL14"/>
    <property type="match status" value="1"/>
</dbReference>
<dbReference type="FunFam" id="2.40.150.20:FF:000001">
    <property type="entry name" value="50S ribosomal protein L14"/>
    <property type="match status" value="1"/>
</dbReference>
<dbReference type="Gene3D" id="2.40.150.20">
    <property type="entry name" value="Ribosomal protein L14"/>
    <property type="match status" value="1"/>
</dbReference>
<dbReference type="HAMAP" id="MF_01367">
    <property type="entry name" value="Ribosomal_uL14"/>
    <property type="match status" value="1"/>
</dbReference>
<dbReference type="InterPro" id="IPR000218">
    <property type="entry name" value="Ribosomal_uL14"/>
</dbReference>
<dbReference type="InterPro" id="IPR005745">
    <property type="entry name" value="Ribosomal_uL14_bac-type"/>
</dbReference>
<dbReference type="InterPro" id="IPR036853">
    <property type="entry name" value="Ribosomal_uL14_sf"/>
</dbReference>
<dbReference type="NCBIfam" id="TIGR01067">
    <property type="entry name" value="rplN_bact"/>
    <property type="match status" value="1"/>
</dbReference>
<dbReference type="PANTHER" id="PTHR11761">
    <property type="entry name" value="50S/60S RIBOSOMAL PROTEIN L14/L23"/>
    <property type="match status" value="1"/>
</dbReference>
<dbReference type="PANTHER" id="PTHR11761:SF3">
    <property type="entry name" value="LARGE RIBOSOMAL SUBUNIT PROTEIN UL14M"/>
    <property type="match status" value="1"/>
</dbReference>
<dbReference type="Pfam" id="PF00238">
    <property type="entry name" value="Ribosomal_L14"/>
    <property type="match status" value="1"/>
</dbReference>
<dbReference type="SMART" id="SM01374">
    <property type="entry name" value="Ribosomal_L14"/>
    <property type="match status" value="1"/>
</dbReference>
<dbReference type="SUPFAM" id="SSF50193">
    <property type="entry name" value="Ribosomal protein L14"/>
    <property type="match status" value="1"/>
</dbReference>
<feature type="chain" id="PRO_1000144312" description="Large ribosomal subunit protein uL14">
    <location>
        <begin position="1"/>
        <end position="121"/>
    </location>
</feature>
<reference key="1">
    <citation type="journal article" date="2007" name="PLoS Genet.">
        <title>Patterns and implications of gene gain and loss in the evolution of Prochlorococcus.</title>
        <authorList>
            <person name="Kettler G.C."/>
            <person name="Martiny A.C."/>
            <person name="Huang K."/>
            <person name="Zucker J."/>
            <person name="Coleman M.L."/>
            <person name="Rodrigue S."/>
            <person name="Chen F."/>
            <person name="Lapidus A."/>
            <person name="Ferriera S."/>
            <person name="Johnson J."/>
            <person name="Steglich C."/>
            <person name="Church G.M."/>
            <person name="Richardson P."/>
            <person name="Chisholm S.W."/>
        </authorList>
    </citation>
    <scope>NUCLEOTIDE SEQUENCE [LARGE SCALE GENOMIC DNA]</scope>
    <source>
        <strain>MIT 9211</strain>
    </source>
</reference>
<proteinExistence type="inferred from homology"/>